<protein>
    <recommendedName>
        <fullName evidence="1">Photosystem II reaction center protein K</fullName>
        <shortName evidence="1">PSII-K</shortName>
    </recommendedName>
</protein>
<evidence type="ECO:0000255" key="1">
    <source>
        <dbReference type="HAMAP-Rule" id="MF_00441"/>
    </source>
</evidence>
<comment type="function">
    <text evidence="1">One of the components of the core complex of photosystem II (PSII). PSII is a light-driven water:plastoquinone oxidoreductase that uses light energy to abstract electrons from H(2)O, generating O(2) and a proton gradient subsequently used for ATP formation. It consists of a core antenna complex that captures photons, and an electron transfer chain that converts photonic excitation into a charge separation.</text>
</comment>
<comment type="subunit">
    <text evidence="1">PSII is composed of 1 copy each of membrane proteins PsbA, PsbB, PsbC, PsbD, PsbE, PsbF, PsbH, PsbI, PsbJ, PsbK, PsbL, PsbM, PsbT, PsbX, PsbY, PsbZ, Psb30/Ycf12, at least 3 peripheral proteins of the oxygen-evolving complex and a large number of cofactors. It forms dimeric complexes.</text>
</comment>
<comment type="subcellular location">
    <subcellularLocation>
        <location evidence="1">Plastid</location>
        <location evidence="1">Chloroplast thylakoid membrane</location>
        <topology evidence="1">Single-pass membrane protein</topology>
    </subcellularLocation>
</comment>
<comment type="similarity">
    <text evidence="1">Belongs to the PsbK family.</text>
</comment>
<organism>
    <name type="scientific">Oltmannsiellopsis viridis</name>
    <name type="common">Marine flagellate</name>
    <name type="synonym">Oltmannsiella viridis</name>
    <dbReference type="NCBI Taxonomy" id="51324"/>
    <lineage>
        <taxon>Eukaryota</taxon>
        <taxon>Viridiplantae</taxon>
        <taxon>Chlorophyta</taxon>
        <taxon>Ulvophyceae</taxon>
        <taxon>Oltmannsiellopsidales</taxon>
        <taxon>Oltmannsiellopsidaceae</taxon>
        <taxon>Oltmannsiellopsis</taxon>
    </lineage>
</organism>
<dbReference type="EMBL" id="DQ291132">
    <property type="protein sequence ID" value="ABB81930.1"/>
    <property type="molecule type" value="Genomic_DNA"/>
</dbReference>
<dbReference type="RefSeq" id="YP_635862.1">
    <property type="nucleotide sequence ID" value="NC_008099.1"/>
</dbReference>
<dbReference type="SMR" id="Q20EY3"/>
<dbReference type="GeneID" id="4100108"/>
<dbReference type="GO" id="GO:0009535">
    <property type="term" value="C:chloroplast thylakoid membrane"/>
    <property type="evidence" value="ECO:0007669"/>
    <property type="project" value="UniProtKB-SubCell"/>
</dbReference>
<dbReference type="GO" id="GO:0009539">
    <property type="term" value="C:photosystem II reaction center"/>
    <property type="evidence" value="ECO:0007669"/>
    <property type="project" value="InterPro"/>
</dbReference>
<dbReference type="GO" id="GO:0015979">
    <property type="term" value="P:photosynthesis"/>
    <property type="evidence" value="ECO:0007669"/>
    <property type="project" value="UniProtKB-UniRule"/>
</dbReference>
<dbReference type="HAMAP" id="MF_00441">
    <property type="entry name" value="PSII_PsbK"/>
    <property type="match status" value="1"/>
</dbReference>
<dbReference type="InterPro" id="IPR003687">
    <property type="entry name" value="PSII_PsbK"/>
</dbReference>
<dbReference type="InterPro" id="IPR037270">
    <property type="entry name" value="PSII_PsbK_sf"/>
</dbReference>
<dbReference type="NCBIfam" id="NF002715">
    <property type="entry name" value="PRK02553.1"/>
    <property type="match status" value="1"/>
</dbReference>
<dbReference type="PANTHER" id="PTHR35325">
    <property type="match status" value="1"/>
</dbReference>
<dbReference type="PANTHER" id="PTHR35325:SF1">
    <property type="entry name" value="PHOTOSYSTEM II REACTION CENTER PROTEIN K"/>
    <property type="match status" value="1"/>
</dbReference>
<dbReference type="Pfam" id="PF02533">
    <property type="entry name" value="PsbK"/>
    <property type="match status" value="1"/>
</dbReference>
<dbReference type="SUPFAM" id="SSF161037">
    <property type="entry name" value="Photosystem II reaction center protein K, PsbK"/>
    <property type="match status" value="1"/>
</dbReference>
<sequence>MSLLLAKLPEAYAPFDPIVDVLPIIPVLFLLLAFVWQASVSFR</sequence>
<name>PSBK_OLTVI</name>
<geneLocation type="chloroplast"/>
<keyword id="KW-0150">Chloroplast</keyword>
<keyword id="KW-0472">Membrane</keyword>
<keyword id="KW-0602">Photosynthesis</keyword>
<keyword id="KW-0604">Photosystem II</keyword>
<keyword id="KW-0934">Plastid</keyword>
<keyword id="KW-0674">Reaction center</keyword>
<keyword id="KW-0793">Thylakoid</keyword>
<keyword id="KW-0812">Transmembrane</keyword>
<keyword id="KW-1133">Transmembrane helix</keyword>
<reference key="1">
    <citation type="journal article" date="2006" name="BMC Biol.">
        <title>The complete chloroplast DNA sequence of the green alga Oltmannsiellopsis viridis reveals a distinctive quadripartite architecture in the chloroplast genome of early diverging ulvophytes.</title>
        <authorList>
            <person name="Pombert J.-F."/>
            <person name="Lemieux C."/>
            <person name="Turmel M."/>
        </authorList>
    </citation>
    <scope>NUCLEOTIDE SEQUENCE [LARGE SCALE GENOMIC DNA]</scope>
</reference>
<proteinExistence type="inferred from homology"/>
<feature type="propeptide" id="PRO_0000276160" evidence="1">
    <location>
        <begin position="1"/>
        <end position="6"/>
    </location>
</feature>
<feature type="chain" id="PRO_0000276161" description="Photosystem II reaction center protein K" evidence="1">
    <location>
        <begin position="7"/>
        <end position="43"/>
    </location>
</feature>
<feature type="transmembrane region" description="Helical" evidence="1">
    <location>
        <begin position="18"/>
        <end position="38"/>
    </location>
</feature>
<gene>
    <name evidence="1" type="primary">psbK</name>
</gene>
<accession>Q20EY3</accession>